<organism>
    <name type="scientific">Saccharomyces cerevisiae (strain ATCC 204508 / S288c)</name>
    <name type="common">Baker's yeast</name>
    <dbReference type="NCBI Taxonomy" id="559292"/>
    <lineage>
        <taxon>Eukaryota</taxon>
        <taxon>Fungi</taxon>
        <taxon>Dikarya</taxon>
        <taxon>Ascomycota</taxon>
        <taxon>Saccharomycotina</taxon>
        <taxon>Saccharomycetes</taxon>
        <taxon>Saccharomycetales</taxon>
        <taxon>Saccharomycetaceae</taxon>
        <taxon>Saccharomyces</taxon>
    </lineage>
</organism>
<dbReference type="EMBL" id="L14289">
    <property type="protein sequence ID" value="AAA02920.1"/>
    <property type="molecule type" value="Unassigned_DNA"/>
</dbReference>
<dbReference type="EMBL" id="X69106">
    <property type="protein sequence ID" value="CAA48858.1"/>
    <property type="molecule type" value="mRNA"/>
</dbReference>
<dbReference type="EMBL" id="S68847">
    <property type="protein sequence ID" value="AAB29937.1"/>
    <property type="molecule type" value="Genomic_DNA"/>
</dbReference>
<dbReference type="EMBL" id="U33007">
    <property type="protein sequence ID" value="AAB64878.1"/>
    <property type="molecule type" value="Genomic_DNA"/>
</dbReference>
<dbReference type="EMBL" id="M58331">
    <property type="protein sequence ID" value="AAA34463.1"/>
    <property type="status" value="ALT_FRAME"/>
    <property type="molecule type" value="Genomic_DNA"/>
</dbReference>
<dbReference type="EMBL" id="BK006938">
    <property type="protein sequence ID" value="DAA12263.1"/>
    <property type="molecule type" value="Genomic_DNA"/>
</dbReference>
<dbReference type="PIR" id="A48890">
    <property type="entry name" value="A48890"/>
</dbReference>
<dbReference type="RefSeq" id="NP_010711.3">
    <property type="nucleotide sequence ID" value="NM_001180731.3"/>
</dbReference>
<dbReference type="SMR" id="P24813"/>
<dbReference type="BioGRID" id="32482">
    <property type="interactions" value="87"/>
</dbReference>
<dbReference type="DIP" id="DIP-4491N"/>
<dbReference type="FunCoup" id="P24813">
    <property type="interactions" value="667"/>
</dbReference>
<dbReference type="IntAct" id="P24813">
    <property type="interactions" value="8"/>
</dbReference>
<dbReference type="MINT" id="P24813"/>
<dbReference type="STRING" id="4932.YDR423C"/>
<dbReference type="iPTMnet" id="P24813"/>
<dbReference type="PaxDb" id="4932-YDR423C"/>
<dbReference type="PeptideAtlas" id="P24813"/>
<dbReference type="EnsemblFungi" id="YDR423C_mRNA">
    <property type="protein sequence ID" value="YDR423C"/>
    <property type="gene ID" value="YDR423C"/>
</dbReference>
<dbReference type="GeneID" id="852033"/>
<dbReference type="KEGG" id="sce:YDR423C"/>
<dbReference type="AGR" id="SGD:S000002831"/>
<dbReference type="SGD" id="S000002831">
    <property type="gene designation" value="CAD1"/>
</dbReference>
<dbReference type="VEuPathDB" id="FungiDB:YDR423C"/>
<dbReference type="eggNOG" id="ENOG502RPD7">
    <property type="taxonomic scope" value="Eukaryota"/>
</dbReference>
<dbReference type="GeneTree" id="ENSGT00940000176699"/>
<dbReference type="HOGENOM" id="CLU_702392_0_0_1"/>
<dbReference type="InParanoid" id="P24813"/>
<dbReference type="OMA" id="KIWERIN"/>
<dbReference type="OrthoDB" id="5380163at2759"/>
<dbReference type="BioCyc" id="YEAST:G3O-29964-MONOMER"/>
<dbReference type="BioGRID-ORCS" id="852033">
    <property type="hits" value="0 hits in 13 CRISPR screens"/>
</dbReference>
<dbReference type="PHI-base" id="PHI:2812"/>
<dbReference type="PRO" id="PR:P24813"/>
<dbReference type="Proteomes" id="UP000002311">
    <property type="component" value="Chromosome IV"/>
</dbReference>
<dbReference type="RNAct" id="P24813">
    <property type="molecule type" value="protein"/>
</dbReference>
<dbReference type="GO" id="GO:0005737">
    <property type="term" value="C:cytoplasm"/>
    <property type="evidence" value="ECO:0000314"/>
    <property type="project" value="SGD"/>
</dbReference>
<dbReference type="GO" id="GO:0005634">
    <property type="term" value="C:nucleus"/>
    <property type="evidence" value="ECO:0000314"/>
    <property type="project" value="SGD"/>
</dbReference>
<dbReference type="GO" id="GO:0090575">
    <property type="term" value="C:RNA polymerase II transcription regulator complex"/>
    <property type="evidence" value="ECO:0000318"/>
    <property type="project" value="GO_Central"/>
</dbReference>
<dbReference type="GO" id="GO:0001228">
    <property type="term" value="F:DNA-binding transcription activator activity, RNA polymerase II-specific"/>
    <property type="evidence" value="ECO:0000314"/>
    <property type="project" value="SGD"/>
</dbReference>
<dbReference type="GO" id="GO:0000976">
    <property type="term" value="F:transcription cis-regulatory region binding"/>
    <property type="evidence" value="ECO:0000318"/>
    <property type="project" value="GO_Central"/>
</dbReference>
<dbReference type="GO" id="GO:0033554">
    <property type="term" value="P:cellular response to stress"/>
    <property type="evidence" value="ECO:0000316"/>
    <property type="project" value="SGD"/>
</dbReference>
<dbReference type="GO" id="GO:0045944">
    <property type="term" value="P:positive regulation of transcription by RNA polymerase II"/>
    <property type="evidence" value="ECO:0000314"/>
    <property type="project" value="SGD"/>
</dbReference>
<dbReference type="GO" id="GO:0046686">
    <property type="term" value="P:response to cadmium ion"/>
    <property type="evidence" value="ECO:0007669"/>
    <property type="project" value="UniProtKB-KW"/>
</dbReference>
<dbReference type="CDD" id="cd14688">
    <property type="entry name" value="bZIP_YAP"/>
    <property type="match status" value="1"/>
</dbReference>
<dbReference type="Gene3D" id="1.20.5.170">
    <property type="match status" value="1"/>
</dbReference>
<dbReference type="Gene3D" id="1.10.238.100">
    <property type="entry name" value="YAP1 redox domain. Chain B"/>
    <property type="match status" value="1"/>
</dbReference>
<dbReference type="InterPro" id="IPR050936">
    <property type="entry name" value="AP-1-like"/>
</dbReference>
<dbReference type="InterPro" id="IPR004827">
    <property type="entry name" value="bZIP"/>
</dbReference>
<dbReference type="InterPro" id="IPR046347">
    <property type="entry name" value="bZIP_sf"/>
</dbReference>
<dbReference type="InterPro" id="IPR013910">
    <property type="entry name" value="TF_PAP1"/>
</dbReference>
<dbReference type="InterPro" id="IPR023167">
    <property type="entry name" value="Yap1_redox_dom_sf"/>
</dbReference>
<dbReference type="PANTHER" id="PTHR40621:SF6">
    <property type="entry name" value="AP-1-LIKE TRANSCRIPTION FACTOR YAP1-RELATED"/>
    <property type="match status" value="1"/>
</dbReference>
<dbReference type="PANTHER" id="PTHR40621">
    <property type="entry name" value="TRANSCRIPTION FACTOR KAPC-RELATED"/>
    <property type="match status" value="1"/>
</dbReference>
<dbReference type="Pfam" id="PF00170">
    <property type="entry name" value="bZIP_1"/>
    <property type="match status" value="1"/>
</dbReference>
<dbReference type="Pfam" id="PF08601">
    <property type="entry name" value="PAP1"/>
    <property type="match status" value="1"/>
</dbReference>
<dbReference type="SMART" id="SM00338">
    <property type="entry name" value="BRLZ"/>
    <property type="match status" value="1"/>
</dbReference>
<dbReference type="SUPFAM" id="SSF57959">
    <property type="entry name" value="Leucine zipper domain"/>
    <property type="match status" value="1"/>
</dbReference>
<dbReference type="SUPFAM" id="SSF111430">
    <property type="entry name" value="YAP1 redox domain"/>
    <property type="match status" value="1"/>
</dbReference>
<dbReference type="PROSITE" id="PS50217">
    <property type="entry name" value="BZIP"/>
    <property type="match status" value="1"/>
</dbReference>
<dbReference type="PROSITE" id="PS00036">
    <property type="entry name" value="BZIP_BASIC"/>
    <property type="match status" value="1"/>
</dbReference>
<name>AP2_YEAST</name>
<gene>
    <name evidence="17" type="primary">CAD1</name>
    <name evidence="16" type="synonym">YAP2</name>
    <name evidence="21" type="ordered locus">YDR423C</name>
    <name type="ORF">D9461.12</name>
</gene>
<feature type="chain" id="PRO_0000076522" description="AP-1-like transcription factor YAP2">
    <location>
        <begin position="1"/>
        <end position="409"/>
    </location>
</feature>
<feature type="domain" description="bZIP" evidence="3">
    <location>
        <begin position="43"/>
        <end position="106"/>
    </location>
</feature>
<feature type="region of interest" description="Disordered" evidence="4">
    <location>
        <begin position="26"/>
        <end position="64"/>
    </location>
</feature>
<feature type="region of interest" description="Basic motif" evidence="3">
    <location>
        <begin position="46"/>
        <end position="69"/>
    </location>
</feature>
<feature type="region of interest" description="Leucine-zipper" evidence="3">
    <location>
        <begin position="71"/>
        <end position="99"/>
    </location>
</feature>
<feature type="region of interest" description="Disordered" evidence="4">
    <location>
        <begin position="127"/>
        <end position="156"/>
    </location>
</feature>
<feature type="region of interest" description="c-CRD" evidence="1">
    <location>
        <begin position="356"/>
        <end position="387"/>
    </location>
</feature>
<feature type="short sequence motif" description="Bipartite nuclear localization signal" evidence="2">
    <location>
        <begin position="17"/>
        <end position="24"/>
    </location>
</feature>
<feature type="short sequence motif" description="Bipartite nuclear localization signal" evidence="2">
    <location>
        <begin position="47"/>
        <end position="54"/>
    </location>
</feature>
<feature type="short sequence motif" description="Nuclear export signal" evidence="1">
    <location>
        <begin position="372"/>
        <end position="379"/>
    </location>
</feature>
<feature type="mutagenesis site" description="Only partially accumulates in the nucleus in response to cadmium. Does not accumulate in the nucleus; when associated with A-387." evidence="10">
    <original>C</original>
    <variation>A</variation>
    <location>
        <position position="356"/>
    </location>
</feature>
<feature type="mutagenesis site" description="No effect." evidence="10">
    <original>C</original>
    <variation>A</variation>
    <location>
        <position position="378"/>
    </location>
</feature>
<feature type="mutagenesis site" description="Only partially accumulates in the nucleus in response to cadmium. Does not accumulate in the nucleus; when associated with A-356." evidence="10">
    <original>C</original>
    <variation>A</variation>
    <location>
        <position position="387"/>
    </location>
</feature>
<feature type="mutagenesis site" description="Does not accumulate in the nucleus in response to cadmium." evidence="10">
    <original>C</original>
    <variation>A</variation>
    <location>
        <position position="391"/>
    </location>
</feature>
<feature type="sequence conflict" description="In Ref. 6; AAA34463." evidence="18" ref="6">
    <original>P</original>
    <variation>L</variation>
    <location>
        <position position="36"/>
    </location>
</feature>
<feature type="sequence conflict" description="In Ref. 6; AAA34463." evidence="18" ref="6">
    <original>D</original>
    <variation>N</variation>
    <location>
        <position position="90"/>
    </location>
</feature>
<feature type="sequence conflict" description="In Ref. 6; AAA34463." evidence="18" ref="6">
    <original>E</original>
    <variation>K</variation>
    <location>
        <position position="102"/>
    </location>
</feature>
<feature type="sequence conflict" description="In Ref. 6; AAA34463." evidence="18" ref="6">
    <original>E</original>
    <variation>Q</variation>
    <location>
        <position position="125"/>
    </location>
</feature>
<feature type="sequence conflict" description="In Ref. 6; AAA34463." evidence="18" ref="6">
    <original>N</original>
    <variation>D</variation>
    <location>
        <position position="131"/>
    </location>
</feature>
<feature type="sequence conflict" description="In Ref. 6; AAA34463." evidence="18" ref="6">
    <original>A</original>
    <variation>V</variation>
    <location>
        <position position="142"/>
    </location>
</feature>
<feature type="sequence conflict" description="In Ref. 6; AAA34463." evidence="18" ref="6">
    <original>E</original>
    <variation>G</variation>
    <location>
        <position position="145"/>
    </location>
</feature>
<feature type="sequence conflict" description="In Ref. 3; AAB29937." evidence="18" ref="3">
    <original>V</original>
    <variation>L</variation>
    <location>
        <position position="327"/>
    </location>
</feature>
<feature type="sequence conflict" description="In Ref. 3; AAB29937." evidence="18" ref="3">
    <original>T</original>
    <variation>I</variation>
    <location>
        <position position="337"/>
    </location>
</feature>
<feature type="sequence conflict" description="In Ref. 3; AAB29937." evidence="18" ref="3">
    <original>S</original>
    <variation>I</variation>
    <location>
        <position position="347"/>
    </location>
</feature>
<feature type="sequence conflict" description="In Ref. 3; AAB29937." evidence="18" ref="3">
    <original>A</original>
    <variation>P</variation>
    <location>
        <position position="354"/>
    </location>
</feature>
<comment type="function">
    <text evidence="5 6 9 10 11 12 14 15">Transcription activator involved in oxidative stress response and cadmium resistance. Regulates the transcription of genes overrepresented for the function of stabilizing proteins including the inducible Hsp90-family protein HSP82. Preferentially binds to promoters with the core binding site 5'-TTA[CG]TAA-3'. Activity of the transcription factor is controlled through oxidation of specific cysteine residues resulting in the alteration of its subcellular location. Activation by alkyl hydroperoxides or cadmium induces nuclear accumulation and as a result CAD1/YAP2 transcriptional activity.</text>
</comment>
<comment type="subunit">
    <text evidence="9 10 19">Homodimer; disulfide-linked, upon oxidation (Probable). Interacts in the nucleus with the nuclear export protein CRM1 (PubMed:17187783). Interacts with RCK1 (PubMed:15341652).</text>
</comment>
<comment type="subcellular location">
    <subcellularLocation>
        <location evidence="7 9 10">Cytoplasm</location>
    </subcellularLocation>
    <subcellularLocation>
        <location evidence="7 9 10">Nucleus</location>
    </subcellularLocation>
    <text evidence="9 10">Oxidized CAD1/YAP2 is found predominantly in the nucleus, while reduced CAD1/YAP2 is continuously exported to the cytoplasm by CRM1/exportin 1.</text>
</comment>
<comment type="induction">
    <text evidence="5">CAD1/YAP2 expression is at least partially regulated at the level of mRNA stability. Two small upstream open reading frames (uORF) in its mRNA cause increased RNA decay. The translation initiation factor eIF2 counteracts this effect by causing reinitiation at the functional initiation site, thus suppressing RNA decay.</text>
</comment>
<comment type="domain">
    <text evidence="1 19">Contains a C-terminal cysteine rich domain (c-CRD), but lacks the N-terminal CRD (n-CRD) found in its paralog YAP1. It probably also contains embedded in the c-CRD a nuclear export signal, with which the nuclear export protein CRM1/exportin 1 may interact in the absence of inter- or intramolecular disulfide bonds (or otherwise oxidized/modified cysteines) within the c-CRD.</text>
</comment>
<comment type="PTM">
    <text evidence="10 11">Depending on the oxidative stress inducing agent, CAD1/YAP2 can undergo two distinct conformational changes, both through oxidation of cysteine residues, and both masking the nuclear export signal, thus abolishing nuclear export by CRM1/exportin 1. Peroxide stress induces the formation of possible intramolecular disulfide bonds as well as intermolcular disulfide within a homodimer. Cadmium may bind directly to specific cysteine residues (Cys-391 and either Cys-356 or Cys-387) in the c-CRD.</text>
</comment>
<comment type="disruption phenotype">
    <text evidence="13">Hypersensitive to the cytotoxic metal cadmium.</text>
</comment>
<comment type="miscellaneous">
    <text evidence="20">One of 8 closely related fungi-specific YAP proteins (YAP1 to YAP8), which all seem to be transcription activators of the environmental stress response and metabolism control pathways and to have similar but not identical DNA binding specificities.</text>
</comment>
<comment type="miscellaneous">
    <text evidence="8">Present with 623 molecules/cell in log phase SD medium.</text>
</comment>
<comment type="similarity">
    <text evidence="18">Belongs to the bZIP family. YAP subfamily.</text>
</comment>
<comment type="sequence caution" evidence="18">
    <conflict type="frameshift">
        <sequence resource="EMBL-CDS" id="AAA34463"/>
    </conflict>
</comment>
<keyword id="KW-0010">Activator</keyword>
<keyword id="KW-0105">Cadmium resistance</keyword>
<keyword id="KW-0963">Cytoplasm</keyword>
<keyword id="KW-1015">Disulfide bond</keyword>
<keyword id="KW-0238">DNA-binding</keyword>
<keyword id="KW-0539">Nucleus</keyword>
<keyword id="KW-1185">Reference proteome</keyword>
<keyword id="KW-0804">Transcription</keyword>
<keyword id="KW-0805">Transcription regulation</keyword>
<sequence length="409" mass="45752">MGNILRKGQQIYLAGDMKKQMLLNKDGTPKRKVGRPGRKRIDSEAKSRRTAQNRAAQRAFRDRKEAKMKSLQERVELLEQKDAQNKTTTDFLLCSLKSLLSEITKYRAKNSDDERILAFLDDLQEQQKRENEKGTSTAVSKAAKELPSPNSDENMTVNTSIEVQPHTQENEKVMWNIGSWNAPSLTNSWDSPPGNRTGAVTIGDESINGSEMPDFSLDLVSNDRQTGLEALDYDIHNYFPQHSERLTAEKIDTSACQCEIDQKYLPYETEDDTLFPSVLPLAVGSQCNNICNRKCIGTKPCSNKEIKCDLITSHLLNQKSLASVLPVAASHTKTIRTQSEAIEHISSAISNGKASCYHILEEISSLPKYSSLDIDDLCSELIIKAKCTDDCKIVVKARDLQSALVRQLL</sequence>
<protein>
    <recommendedName>
        <fullName evidence="18">AP-1-like transcription factor YAP2</fullName>
    </recommendedName>
    <alternativeName>
        <fullName evidence="17">Cadmium resistance protein 1</fullName>
    </alternativeName>
    <alternativeName>
        <fullName>Transcription factor CAD1</fullName>
    </alternativeName>
</protein>
<proteinExistence type="evidence at protein level"/>
<accession>P24813</accession>
<accession>D6VT53</accession>
<accession>Q02259</accession>
<evidence type="ECO:0000250" key="1">
    <source>
        <dbReference type="UniProtKB" id="P19880"/>
    </source>
</evidence>
<evidence type="ECO:0000255" key="2">
    <source>
        <dbReference type="PROSITE-ProRule" id="PRU00768"/>
    </source>
</evidence>
<evidence type="ECO:0000255" key="3">
    <source>
        <dbReference type="PROSITE-ProRule" id="PRU00978"/>
    </source>
</evidence>
<evidence type="ECO:0000256" key="4">
    <source>
        <dbReference type="SAM" id="MobiDB-lite"/>
    </source>
</evidence>
<evidence type="ECO:0000269" key="5">
    <source>
    </source>
</evidence>
<evidence type="ECO:0000269" key="6">
    <source>
    </source>
</evidence>
<evidence type="ECO:0000269" key="7">
    <source>
    </source>
</evidence>
<evidence type="ECO:0000269" key="8">
    <source>
    </source>
</evidence>
<evidence type="ECO:0000269" key="9">
    <source>
    </source>
</evidence>
<evidence type="ECO:0000269" key="10">
    <source>
    </source>
</evidence>
<evidence type="ECO:0000269" key="11">
    <source>
    </source>
</evidence>
<evidence type="ECO:0000269" key="12">
    <source>
    </source>
</evidence>
<evidence type="ECO:0000269" key="13">
    <source>
    </source>
</evidence>
<evidence type="ECO:0000269" key="14">
    <source>
    </source>
</evidence>
<evidence type="ECO:0000269" key="15">
    <source>
    </source>
</evidence>
<evidence type="ECO:0000303" key="16">
    <source>
    </source>
</evidence>
<evidence type="ECO:0000303" key="17">
    <source>
    </source>
</evidence>
<evidence type="ECO:0000305" key="18"/>
<evidence type="ECO:0000305" key="19">
    <source>
    </source>
</evidence>
<evidence type="ECO:0000305" key="20">
    <source>
    </source>
</evidence>
<evidence type="ECO:0000312" key="21">
    <source>
        <dbReference type="SGD" id="S000002831"/>
    </source>
</evidence>
<reference key="1">
    <citation type="journal article" date="1993" name="J. Biol. Chem.">
        <title>Yeast bZip proteins mediate pleiotropic drug and metal resistance.</title>
        <authorList>
            <person name="Wu A."/>
            <person name="Wemmie J.A."/>
            <person name="Edgington N.P."/>
            <person name="Goebl M."/>
            <person name="Guevara J.L."/>
            <person name="Moye-Rowley S.W."/>
        </authorList>
    </citation>
    <scope>NUCLEOTIDE SEQUENCE [GENOMIC DNA]</scope>
    <scope>DISRUPTION PHENOTYPE</scope>
</reference>
<reference key="2">
    <citation type="journal article" date="1993" name="J. Biol. Chem.">
        <title>Overexpression of YAP2, coding for a new yAP protein, and YAP1 in Saccharomyces cerevisiae alleviates growth inhibition caused by 1,10-phenanthroline.</title>
        <authorList>
            <person name="Bossier P."/>
            <person name="Fernandes L."/>
            <person name="Rocha D."/>
            <person name="Rodrigues-Pousada C."/>
        </authorList>
    </citation>
    <scope>NUCLEOTIDE SEQUENCE [MRNA]</scope>
    <source>
        <strain>W303A</strain>
    </source>
</reference>
<reference key="3">
    <citation type="journal article" date="1994" name="Mol. Gen. Genet.">
        <title>Stress-induced transcriptional activation mediated by YAP1 and YAP2 genes that encode the Jun family of transcriptional activators in Saccharomyces cerevisiae.</title>
        <authorList>
            <person name="Hirata D."/>
            <person name="Yano K."/>
            <person name="Miyakawa T."/>
        </authorList>
    </citation>
    <scope>NUCLEOTIDE SEQUENCE [GENOMIC DNA]</scope>
    <scope>OXIDATIVE STRESS RESPONSE OF YAP2</scope>
    <source>
        <strain>ATCC 200060 / W303</strain>
    </source>
</reference>
<reference key="4">
    <citation type="journal article" date="1997" name="Nature">
        <title>The nucleotide sequence of Saccharomyces cerevisiae chromosome IV.</title>
        <authorList>
            <person name="Jacq C."/>
            <person name="Alt-Moerbe J."/>
            <person name="Andre B."/>
            <person name="Arnold W."/>
            <person name="Bahr A."/>
            <person name="Ballesta J.P.G."/>
            <person name="Bargues M."/>
            <person name="Baron L."/>
            <person name="Becker A."/>
            <person name="Biteau N."/>
            <person name="Bloecker H."/>
            <person name="Blugeon C."/>
            <person name="Boskovic J."/>
            <person name="Brandt P."/>
            <person name="Brueckner M."/>
            <person name="Buitrago M.J."/>
            <person name="Coster F."/>
            <person name="Delaveau T."/>
            <person name="del Rey F."/>
            <person name="Dujon B."/>
            <person name="Eide L.G."/>
            <person name="Garcia-Cantalejo J.M."/>
            <person name="Goffeau A."/>
            <person name="Gomez-Peris A."/>
            <person name="Granotier C."/>
            <person name="Hanemann V."/>
            <person name="Hankeln T."/>
            <person name="Hoheisel J.D."/>
            <person name="Jaeger W."/>
            <person name="Jimenez A."/>
            <person name="Jonniaux J.-L."/>
            <person name="Kraemer C."/>
            <person name="Kuester H."/>
            <person name="Laamanen P."/>
            <person name="Legros Y."/>
            <person name="Louis E.J."/>
            <person name="Moeller-Rieker S."/>
            <person name="Monnet A."/>
            <person name="Moro M."/>
            <person name="Mueller-Auer S."/>
            <person name="Nussbaumer B."/>
            <person name="Paricio N."/>
            <person name="Paulin L."/>
            <person name="Perea J."/>
            <person name="Perez-Alonso M."/>
            <person name="Perez-Ortin J.E."/>
            <person name="Pohl T.M."/>
            <person name="Prydz H."/>
            <person name="Purnelle B."/>
            <person name="Rasmussen S.W."/>
            <person name="Remacha M.A."/>
            <person name="Revuelta J.L."/>
            <person name="Rieger M."/>
            <person name="Salom D."/>
            <person name="Saluz H.P."/>
            <person name="Saiz J.E."/>
            <person name="Saren A.-M."/>
            <person name="Schaefer M."/>
            <person name="Scharfe M."/>
            <person name="Schmidt E.R."/>
            <person name="Schneider C."/>
            <person name="Scholler P."/>
            <person name="Schwarz S."/>
            <person name="Soler-Mira A."/>
            <person name="Urrestarazu L.A."/>
            <person name="Verhasselt P."/>
            <person name="Vissers S."/>
            <person name="Voet M."/>
            <person name="Volckaert G."/>
            <person name="Wagner G."/>
            <person name="Wambutt R."/>
            <person name="Wedler E."/>
            <person name="Wedler H."/>
            <person name="Woelfl S."/>
            <person name="Harris D.E."/>
            <person name="Bowman S."/>
            <person name="Brown D."/>
            <person name="Churcher C.M."/>
            <person name="Connor R."/>
            <person name="Dedman K."/>
            <person name="Gentles S."/>
            <person name="Hamlin N."/>
            <person name="Hunt S."/>
            <person name="Jones L."/>
            <person name="McDonald S."/>
            <person name="Murphy L.D."/>
            <person name="Niblett D."/>
            <person name="Odell C."/>
            <person name="Oliver K."/>
            <person name="Rajandream M.A."/>
            <person name="Richards C."/>
            <person name="Shore L."/>
            <person name="Walsh S.V."/>
            <person name="Barrell B.G."/>
            <person name="Dietrich F.S."/>
            <person name="Mulligan J.T."/>
            <person name="Allen E."/>
            <person name="Araujo R."/>
            <person name="Aviles E."/>
            <person name="Berno A."/>
            <person name="Carpenter J."/>
            <person name="Chen E."/>
            <person name="Cherry J.M."/>
            <person name="Chung E."/>
            <person name="Duncan M."/>
            <person name="Hunicke-Smith S."/>
            <person name="Hyman R.W."/>
            <person name="Komp C."/>
            <person name="Lashkari D."/>
            <person name="Lew H."/>
            <person name="Lin D."/>
            <person name="Mosedale D."/>
            <person name="Nakahara K."/>
            <person name="Namath A."/>
            <person name="Oefner P."/>
            <person name="Oh C."/>
            <person name="Petel F.X."/>
            <person name="Roberts D."/>
            <person name="Schramm S."/>
            <person name="Schroeder M."/>
            <person name="Shogren T."/>
            <person name="Shroff N."/>
            <person name="Winant A."/>
            <person name="Yelton M.A."/>
            <person name="Botstein D."/>
            <person name="Davis R.W."/>
            <person name="Johnston M."/>
            <person name="Andrews S."/>
            <person name="Brinkman R."/>
            <person name="Cooper J."/>
            <person name="Ding H."/>
            <person name="Du Z."/>
            <person name="Favello A."/>
            <person name="Fulton L."/>
            <person name="Gattung S."/>
            <person name="Greco T."/>
            <person name="Hallsworth K."/>
            <person name="Hawkins J."/>
            <person name="Hillier L.W."/>
            <person name="Jier M."/>
            <person name="Johnson D."/>
            <person name="Johnston L."/>
            <person name="Kirsten J."/>
            <person name="Kucaba T."/>
            <person name="Langston Y."/>
            <person name="Latreille P."/>
            <person name="Le T."/>
            <person name="Mardis E."/>
            <person name="Menezes S."/>
            <person name="Miller N."/>
            <person name="Nhan M."/>
            <person name="Pauley A."/>
            <person name="Peluso D."/>
            <person name="Rifkin L."/>
            <person name="Riles L."/>
            <person name="Taich A."/>
            <person name="Trevaskis E."/>
            <person name="Vignati D."/>
            <person name="Wilcox L."/>
            <person name="Wohldman P."/>
            <person name="Vaudin M."/>
            <person name="Wilson R."/>
            <person name="Waterston R."/>
            <person name="Albermann K."/>
            <person name="Hani J."/>
            <person name="Heumann K."/>
            <person name="Kleine K."/>
            <person name="Mewes H.-W."/>
            <person name="Zollner A."/>
            <person name="Zaccaria P."/>
        </authorList>
    </citation>
    <scope>NUCLEOTIDE SEQUENCE [LARGE SCALE GENOMIC DNA]</scope>
    <source>
        <strain>ATCC 204508 / S288c</strain>
    </source>
</reference>
<reference key="5">
    <citation type="journal article" date="2014" name="G3 (Bethesda)">
        <title>The reference genome sequence of Saccharomyces cerevisiae: Then and now.</title>
        <authorList>
            <person name="Engel S.R."/>
            <person name="Dietrich F.S."/>
            <person name="Fisk D.G."/>
            <person name="Binkley G."/>
            <person name="Balakrishnan R."/>
            <person name="Costanzo M.C."/>
            <person name="Dwight S.S."/>
            <person name="Hitz B.C."/>
            <person name="Karra K."/>
            <person name="Nash R.S."/>
            <person name="Weng S."/>
            <person name="Wong E.D."/>
            <person name="Lloyd P."/>
            <person name="Skrzypek M.S."/>
            <person name="Miyasato S.R."/>
            <person name="Simison M."/>
            <person name="Cherry J.M."/>
        </authorList>
    </citation>
    <scope>GENOME REANNOTATION</scope>
    <source>
        <strain>ATCC 204508 / S288c</strain>
    </source>
</reference>
<reference key="6">
    <citation type="journal article" date="1992" name="Yeast">
        <title>Molecular cloning and analysis of autonomous replicating sequence of Candida maltosa.</title>
        <authorList>
            <person name="Sasnauskas K."/>
            <person name="Jomantiene R."/>
            <person name="Lebediene E."/>
            <person name="Lebedys J."/>
            <person name="Januska A."/>
            <person name="Janulaitis A."/>
        </authorList>
    </citation>
    <scope>NUCLEOTIDE SEQUENCE [GENOMIC DNA] OF 1-363</scope>
    <source>
        <strain>ATCC 64665 / S288c / DC5</strain>
    </source>
</reference>
<reference key="7">
    <citation type="journal article" date="1995" name="Mol. Microbiol.">
        <title>The role of the YAP1 and YAP2 genes in the regulation of the adaptive oxidative stress responses of Saccharomyces cerevisiae.</title>
        <authorList>
            <person name="Stephen D.W."/>
            <person name="Rivers S.L."/>
            <person name="Jamieson D.J."/>
        </authorList>
    </citation>
    <scope>FUNCTION</scope>
    <scope>OXIDATIVE STRESS RESPONSE OF YAP2</scope>
</reference>
<reference key="8">
    <citation type="journal article" date="1997" name="Mol. Cell. Biol.">
        <title>Yap, a novel family of eight bZIP proteins in Saccharomyces cerevisiae with distinct biological functions.</title>
        <authorList>
            <person name="Fernandes L."/>
            <person name="Rodrigues-Pousada C."/>
            <person name="Struhl K."/>
        </authorList>
    </citation>
    <scope>FUNCTION</scope>
    <scope>DNA-BINDING</scope>
</reference>
<reference key="9">
    <citation type="journal article" date="1997" name="EMBO J.">
        <title>Regulation of yAP-1 nuclear localization in response to oxidative stress.</title>
        <authorList>
            <person name="Kuge S."/>
            <person name="Jones N."/>
            <person name="Nomoto A."/>
        </authorList>
    </citation>
    <scope>FUNCTION</scope>
</reference>
<reference key="10">
    <citation type="journal article" date="1999" name="EMBO J.">
        <title>Post-termination ribosome interactions with the 5'UTR modulate yeast mRNA stability.</title>
        <authorList>
            <person name="Vilela C."/>
            <person name="Ramirez C.V."/>
            <person name="Linz B."/>
            <person name="Rodrigues-Pousada C."/>
            <person name="McCarthy J.E."/>
        </authorList>
    </citation>
    <scope>FUNCTION</scope>
    <scope>POST-TRANSCRIPTIONAL EXPRESSION CONTROL</scope>
</reference>
<reference key="11">
    <citation type="journal article" date="2002" name="Mol. Biol. Cell">
        <title>Discrimination between paralogs using microarray analysis: application to the Yap1p and Yap2p transcriptional networks.</title>
        <authorList>
            <person name="Cohen B.A."/>
            <person name="Pilpel Y."/>
            <person name="Mitra R.D."/>
            <person name="Church G.M."/>
        </authorList>
    </citation>
    <scope>TRANSCRIPTION PROFILING</scope>
</reference>
<reference key="12">
    <citation type="journal article" date="2003" name="Nature">
        <title>Global analysis of protein localization in budding yeast.</title>
        <authorList>
            <person name="Huh W.-K."/>
            <person name="Falvo J.V."/>
            <person name="Gerke L.C."/>
            <person name="Carroll A.S."/>
            <person name="Howson R.W."/>
            <person name="Weissman J.S."/>
            <person name="O'Shea E.K."/>
        </authorList>
    </citation>
    <scope>SUBCELLULAR LOCATION [LARGE SCALE ANALYSIS]</scope>
</reference>
<reference key="13">
    <citation type="journal article" date="2003" name="Nature">
        <title>Global analysis of protein expression in yeast.</title>
        <authorList>
            <person name="Ghaemmaghami S."/>
            <person name="Huh W.-K."/>
            <person name="Bower K."/>
            <person name="Howson R.W."/>
            <person name="Belle A."/>
            <person name="Dephoure N."/>
            <person name="O'Shea E.K."/>
            <person name="Weissman J.S."/>
        </authorList>
    </citation>
    <scope>LEVEL OF PROTEIN EXPRESSION [LARGE SCALE ANALYSIS]</scope>
</reference>
<reference key="14">
    <citation type="journal article" date="2004" name="Mol. Microbiol.">
        <title>Rck1 and Rck2 MAPKAP kinases and the HOG pathway are required for oxidative stress resistance.</title>
        <authorList>
            <person name="Bilsland E."/>
            <person name="Molin C."/>
            <person name="Swaminathan S."/>
            <person name="Ramne A."/>
            <person name="Sunnerhagen P."/>
        </authorList>
    </citation>
    <scope>FUNCTION</scope>
    <scope>SUBCELLULAR LOCATION</scope>
    <scope>INTERACTION WITH RCK1</scope>
</reference>
<reference key="15">
    <citation type="journal article" date="2007" name="FEBS Lett.">
        <title>The S. cerevisiae Yap1 and Yap2 transcription factors share a common cadmium-sensing domain.</title>
        <authorList>
            <person name="Azevedo D."/>
            <person name="Nascimento L."/>
            <person name="Labarre J."/>
            <person name="Toledano M.B."/>
            <person name="Rodrigues-Pousada C."/>
        </authorList>
    </citation>
    <scope>FUNCTION</scope>
    <scope>SUBCELLULAR LOCATION</scope>
    <scope>INTERACTION WITH CRM1</scope>
    <scope>MUTAGENESIS OF CYS-356; CYS-378; CYS-387 AND CYS-391</scope>
</reference>
<reference key="16">
    <citation type="journal article" date="2010" name="J. Biol. Chem.">
        <title>Peroxiredoxin Ahp1 acts as a receptor for alkylhydroperoxides to induce disulfide bond formation in the Cad1 transcription factor.</title>
        <authorList>
            <person name="Iwai K."/>
            <person name="Naganuma A."/>
            <person name="Kuge S."/>
        </authorList>
    </citation>
    <scope>FUNCTION</scope>
    <scope>SUBUNIT</scope>
</reference>